<gene>
    <name evidence="1" type="primary">engB</name>
    <name type="ordered locus">Bphyt_3612</name>
</gene>
<protein>
    <recommendedName>
        <fullName evidence="1">Probable GTP-binding protein EngB</fullName>
    </recommendedName>
</protein>
<reference key="1">
    <citation type="journal article" date="2011" name="J. Bacteriol.">
        <title>Complete genome sequence of the plant growth-promoting endophyte Burkholderia phytofirmans strain PsJN.</title>
        <authorList>
            <person name="Weilharter A."/>
            <person name="Mitter B."/>
            <person name="Shin M.V."/>
            <person name="Chain P.S."/>
            <person name="Nowak J."/>
            <person name="Sessitsch A."/>
        </authorList>
    </citation>
    <scope>NUCLEOTIDE SEQUENCE [LARGE SCALE GENOMIC DNA]</scope>
    <source>
        <strain>DSM 17436 / LMG 22146 / PsJN</strain>
    </source>
</reference>
<feature type="chain" id="PRO_1000115959" description="Probable GTP-binding protein EngB">
    <location>
        <begin position="1"/>
        <end position="217"/>
    </location>
</feature>
<feature type="domain" description="EngB-type G" evidence="1">
    <location>
        <begin position="24"/>
        <end position="207"/>
    </location>
</feature>
<feature type="binding site" evidence="1">
    <location>
        <begin position="32"/>
        <end position="39"/>
    </location>
    <ligand>
        <name>GTP</name>
        <dbReference type="ChEBI" id="CHEBI:37565"/>
    </ligand>
</feature>
<feature type="binding site" evidence="1">
    <location>
        <position position="39"/>
    </location>
    <ligand>
        <name>Mg(2+)</name>
        <dbReference type="ChEBI" id="CHEBI:18420"/>
    </ligand>
</feature>
<feature type="binding site" evidence="1">
    <location>
        <begin position="59"/>
        <end position="63"/>
    </location>
    <ligand>
        <name>GTP</name>
        <dbReference type="ChEBI" id="CHEBI:37565"/>
    </ligand>
</feature>
<feature type="binding site" evidence="1">
    <location>
        <position position="61"/>
    </location>
    <ligand>
        <name>Mg(2+)</name>
        <dbReference type="ChEBI" id="CHEBI:18420"/>
    </ligand>
</feature>
<feature type="binding site" evidence="1">
    <location>
        <begin position="81"/>
        <end position="84"/>
    </location>
    <ligand>
        <name>GTP</name>
        <dbReference type="ChEBI" id="CHEBI:37565"/>
    </ligand>
</feature>
<feature type="binding site" evidence="1">
    <location>
        <begin position="148"/>
        <end position="151"/>
    </location>
    <ligand>
        <name>GTP</name>
        <dbReference type="ChEBI" id="CHEBI:37565"/>
    </ligand>
</feature>
<feature type="binding site" evidence="1">
    <location>
        <begin position="185"/>
        <end position="188"/>
    </location>
    <ligand>
        <name>GTP</name>
        <dbReference type="ChEBI" id="CHEBI:37565"/>
    </ligand>
</feature>
<sequence>MSFLLHQSRFFTTVNHLRDLPATSQPEICFAGRSNAGKSTAINILCNQKRLAFASKTPGRTQHINYFSVGKADEPTAHLVDLPGYGYAEVPGAAKAHWEALLSTYLQTRSQLRGMILMMDSRRPLTDLDRRMIEWFAPTGKPIHTLLTKCDKLTRQESVNALRATQKGLAEYRTAGYQGELTAQLFSALKRVGIDEAHELIESWLIPSDKGETDAAQ</sequence>
<keyword id="KW-0131">Cell cycle</keyword>
<keyword id="KW-0132">Cell division</keyword>
<keyword id="KW-0342">GTP-binding</keyword>
<keyword id="KW-0460">Magnesium</keyword>
<keyword id="KW-0479">Metal-binding</keyword>
<keyword id="KW-0547">Nucleotide-binding</keyword>
<keyword id="KW-0717">Septation</keyword>
<organism>
    <name type="scientific">Paraburkholderia phytofirmans (strain DSM 17436 / LMG 22146 / PsJN)</name>
    <name type="common">Burkholderia phytofirmans</name>
    <dbReference type="NCBI Taxonomy" id="398527"/>
    <lineage>
        <taxon>Bacteria</taxon>
        <taxon>Pseudomonadati</taxon>
        <taxon>Pseudomonadota</taxon>
        <taxon>Betaproteobacteria</taxon>
        <taxon>Burkholderiales</taxon>
        <taxon>Burkholderiaceae</taxon>
        <taxon>Paraburkholderia</taxon>
    </lineage>
</organism>
<name>ENGB_PARPJ</name>
<proteinExistence type="inferred from homology"/>
<comment type="function">
    <text evidence="1">Necessary for normal cell division and for the maintenance of normal septation.</text>
</comment>
<comment type="cofactor">
    <cofactor evidence="1">
        <name>Mg(2+)</name>
        <dbReference type="ChEBI" id="CHEBI:18420"/>
    </cofactor>
</comment>
<comment type="similarity">
    <text evidence="1">Belongs to the TRAFAC class TrmE-Era-EngA-EngB-Septin-like GTPase superfamily. EngB GTPase family.</text>
</comment>
<dbReference type="EMBL" id="CP001052">
    <property type="protein sequence ID" value="ACD18002.1"/>
    <property type="molecule type" value="Genomic_DNA"/>
</dbReference>
<dbReference type="RefSeq" id="WP_012434560.1">
    <property type="nucleotide sequence ID" value="NC_010681.1"/>
</dbReference>
<dbReference type="SMR" id="B2T719"/>
<dbReference type="STRING" id="398527.Bphyt_3612"/>
<dbReference type="KEGG" id="bpy:Bphyt_3612"/>
<dbReference type="eggNOG" id="COG0218">
    <property type="taxonomic scope" value="Bacteria"/>
</dbReference>
<dbReference type="HOGENOM" id="CLU_033732_1_1_4"/>
<dbReference type="OrthoDB" id="9804921at2"/>
<dbReference type="Proteomes" id="UP000001739">
    <property type="component" value="Chromosome 1"/>
</dbReference>
<dbReference type="GO" id="GO:0005829">
    <property type="term" value="C:cytosol"/>
    <property type="evidence" value="ECO:0007669"/>
    <property type="project" value="TreeGrafter"/>
</dbReference>
<dbReference type="GO" id="GO:0005525">
    <property type="term" value="F:GTP binding"/>
    <property type="evidence" value="ECO:0007669"/>
    <property type="project" value="UniProtKB-UniRule"/>
</dbReference>
<dbReference type="GO" id="GO:0046872">
    <property type="term" value="F:metal ion binding"/>
    <property type="evidence" value="ECO:0007669"/>
    <property type="project" value="UniProtKB-KW"/>
</dbReference>
<dbReference type="GO" id="GO:0000917">
    <property type="term" value="P:division septum assembly"/>
    <property type="evidence" value="ECO:0007669"/>
    <property type="project" value="UniProtKB-KW"/>
</dbReference>
<dbReference type="CDD" id="cd01876">
    <property type="entry name" value="YihA_EngB"/>
    <property type="match status" value="1"/>
</dbReference>
<dbReference type="FunFam" id="3.40.50.300:FF:000098">
    <property type="entry name" value="Probable GTP-binding protein EngB"/>
    <property type="match status" value="1"/>
</dbReference>
<dbReference type="Gene3D" id="3.40.50.300">
    <property type="entry name" value="P-loop containing nucleotide triphosphate hydrolases"/>
    <property type="match status" value="1"/>
</dbReference>
<dbReference type="HAMAP" id="MF_00321">
    <property type="entry name" value="GTPase_EngB"/>
    <property type="match status" value="1"/>
</dbReference>
<dbReference type="InterPro" id="IPR030393">
    <property type="entry name" value="G_ENGB_dom"/>
</dbReference>
<dbReference type="InterPro" id="IPR006073">
    <property type="entry name" value="GTP-bd"/>
</dbReference>
<dbReference type="InterPro" id="IPR019987">
    <property type="entry name" value="GTP-bd_ribosome_bio_YsxC"/>
</dbReference>
<dbReference type="InterPro" id="IPR027417">
    <property type="entry name" value="P-loop_NTPase"/>
</dbReference>
<dbReference type="NCBIfam" id="TIGR03598">
    <property type="entry name" value="GTPase_YsxC"/>
    <property type="match status" value="1"/>
</dbReference>
<dbReference type="PANTHER" id="PTHR11649:SF13">
    <property type="entry name" value="ENGB-TYPE G DOMAIN-CONTAINING PROTEIN"/>
    <property type="match status" value="1"/>
</dbReference>
<dbReference type="PANTHER" id="PTHR11649">
    <property type="entry name" value="MSS1/TRME-RELATED GTP-BINDING PROTEIN"/>
    <property type="match status" value="1"/>
</dbReference>
<dbReference type="Pfam" id="PF01926">
    <property type="entry name" value="MMR_HSR1"/>
    <property type="match status" value="1"/>
</dbReference>
<dbReference type="SUPFAM" id="SSF52540">
    <property type="entry name" value="P-loop containing nucleoside triphosphate hydrolases"/>
    <property type="match status" value="1"/>
</dbReference>
<dbReference type="PROSITE" id="PS51706">
    <property type="entry name" value="G_ENGB"/>
    <property type="match status" value="1"/>
</dbReference>
<evidence type="ECO:0000255" key="1">
    <source>
        <dbReference type="HAMAP-Rule" id="MF_00321"/>
    </source>
</evidence>
<accession>B2T719</accession>